<reference key="1">
    <citation type="journal article" date="2006" name="J. Bacteriol.">
        <title>Complete genome sequence of Yersinia pestis strains Antiqua and Nepal516: evidence of gene reduction in an emerging pathogen.</title>
        <authorList>
            <person name="Chain P.S.G."/>
            <person name="Hu P."/>
            <person name="Malfatti S.A."/>
            <person name="Radnedge L."/>
            <person name="Larimer F."/>
            <person name="Vergez L.M."/>
            <person name="Worsham P."/>
            <person name="Chu M.C."/>
            <person name="Andersen G.L."/>
        </authorList>
    </citation>
    <scope>NUCLEOTIDE SEQUENCE [LARGE SCALE GENOMIC DNA]</scope>
    <source>
        <strain>Nepal516</strain>
    </source>
</reference>
<reference key="2">
    <citation type="submission" date="2009-04" db="EMBL/GenBank/DDBJ databases">
        <title>Yersinia pestis Nepal516A whole genome shotgun sequencing project.</title>
        <authorList>
            <person name="Plunkett G. III"/>
            <person name="Anderson B.D."/>
            <person name="Baumler D.J."/>
            <person name="Burland V."/>
            <person name="Cabot E.L."/>
            <person name="Glasner J.D."/>
            <person name="Mau B."/>
            <person name="Neeno-Eckwall E."/>
            <person name="Perna N.T."/>
            <person name="Munk A.C."/>
            <person name="Tapia R."/>
            <person name="Green L.D."/>
            <person name="Rogers Y.C."/>
            <person name="Detter J.C."/>
            <person name="Bruce D.C."/>
            <person name="Brettin T.S."/>
        </authorList>
    </citation>
    <scope>NUCLEOTIDE SEQUENCE [LARGE SCALE GENOMIC DNA]</scope>
    <source>
        <strain>Nepal516</strain>
    </source>
</reference>
<keyword id="KW-0067">ATP-binding</keyword>
<keyword id="KW-0131">Cell cycle</keyword>
<keyword id="KW-0132">Cell division</keyword>
<keyword id="KW-0159">Chromosome partition</keyword>
<keyword id="KW-0175">Coiled coil</keyword>
<keyword id="KW-0963">Cytoplasm</keyword>
<keyword id="KW-0226">DNA condensation</keyword>
<keyword id="KW-0238">DNA-binding</keyword>
<keyword id="KW-0547">Nucleotide-binding</keyword>
<proteinExistence type="inferred from homology"/>
<gene>
    <name evidence="1" type="primary">mukB</name>
    <name type="ordered locus">YPN_2572</name>
    <name type="ORF">YP516_2896</name>
</gene>
<evidence type="ECO:0000255" key="1">
    <source>
        <dbReference type="HAMAP-Rule" id="MF_01800"/>
    </source>
</evidence>
<name>MUKB_YERPN</name>
<dbReference type="EMBL" id="CP000305">
    <property type="protein sequence ID" value="ABG18900.1"/>
    <property type="molecule type" value="Genomic_DNA"/>
</dbReference>
<dbReference type="EMBL" id="ACNQ01000017">
    <property type="protein sequence ID" value="EEO75011.1"/>
    <property type="molecule type" value="Genomic_DNA"/>
</dbReference>
<dbReference type="RefSeq" id="WP_002211308.1">
    <property type="nucleotide sequence ID" value="NZ_ACNQ01000017.1"/>
</dbReference>
<dbReference type="SMR" id="Q1CGI0"/>
<dbReference type="GeneID" id="57977201"/>
<dbReference type="KEGG" id="ypn:YPN_2572"/>
<dbReference type="HOGENOM" id="CLU_004430_0_0_6"/>
<dbReference type="Proteomes" id="UP000008936">
    <property type="component" value="Chromosome"/>
</dbReference>
<dbReference type="GO" id="GO:0005737">
    <property type="term" value="C:cytoplasm"/>
    <property type="evidence" value="ECO:0007669"/>
    <property type="project" value="UniProtKB-UniRule"/>
</dbReference>
<dbReference type="GO" id="GO:0009295">
    <property type="term" value="C:nucleoid"/>
    <property type="evidence" value="ECO:0007669"/>
    <property type="project" value="UniProtKB-SubCell"/>
</dbReference>
<dbReference type="GO" id="GO:0005524">
    <property type="term" value="F:ATP binding"/>
    <property type="evidence" value="ECO:0007669"/>
    <property type="project" value="UniProtKB-UniRule"/>
</dbReference>
<dbReference type="GO" id="GO:0003677">
    <property type="term" value="F:DNA binding"/>
    <property type="evidence" value="ECO:0007669"/>
    <property type="project" value="UniProtKB-UniRule"/>
</dbReference>
<dbReference type="GO" id="GO:0051301">
    <property type="term" value="P:cell division"/>
    <property type="evidence" value="ECO:0007669"/>
    <property type="project" value="UniProtKB-KW"/>
</dbReference>
<dbReference type="GO" id="GO:0030261">
    <property type="term" value="P:chromosome condensation"/>
    <property type="evidence" value="ECO:0007669"/>
    <property type="project" value="UniProtKB-KW"/>
</dbReference>
<dbReference type="GO" id="GO:0007059">
    <property type="term" value="P:chromosome segregation"/>
    <property type="evidence" value="ECO:0007669"/>
    <property type="project" value="UniProtKB-UniRule"/>
</dbReference>
<dbReference type="GO" id="GO:0006260">
    <property type="term" value="P:DNA replication"/>
    <property type="evidence" value="ECO:0007669"/>
    <property type="project" value="UniProtKB-UniRule"/>
</dbReference>
<dbReference type="FunFam" id="3.30.70.3500:FF:000001">
    <property type="entry name" value="Chromosome partition protein MukB"/>
    <property type="match status" value="1"/>
</dbReference>
<dbReference type="FunFam" id="3.40.1140.10:FF:000001">
    <property type="entry name" value="Chromosome partition protein MukB"/>
    <property type="match status" value="1"/>
</dbReference>
<dbReference type="FunFam" id="3.40.1140.10:FF:000002">
    <property type="entry name" value="Chromosome partition protein MukB"/>
    <property type="match status" value="1"/>
</dbReference>
<dbReference type="Gene3D" id="1.10.287.1490">
    <property type="match status" value="1"/>
</dbReference>
<dbReference type="Gene3D" id="1.20.58.850">
    <property type="match status" value="1"/>
</dbReference>
<dbReference type="Gene3D" id="3.40.1140.10">
    <property type="match status" value="2"/>
</dbReference>
<dbReference type="Gene3D" id="1.20.5.420">
    <property type="entry name" value="Immunoglobulin FC, subunit C"/>
    <property type="match status" value="1"/>
</dbReference>
<dbReference type="Gene3D" id="3.30.70.3500">
    <property type="entry name" value="MukB, hinge domain"/>
    <property type="match status" value="1"/>
</dbReference>
<dbReference type="HAMAP" id="MF_01800">
    <property type="entry name" value="MukB"/>
    <property type="match status" value="1"/>
</dbReference>
<dbReference type="InterPro" id="IPR012090">
    <property type="entry name" value="MukB"/>
</dbReference>
<dbReference type="InterPro" id="IPR050308">
    <property type="entry name" value="MukB/SMC"/>
</dbReference>
<dbReference type="InterPro" id="IPR032520">
    <property type="entry name" value="MukB_hinge"/>
</dbReference>
<dbReference type="InterPro" id="IPR042501">
    <property type="entry name" value="MukB_hinge_sf"/>
</dbReference>
<dbReference type="InterPro" id="IPR007406">
    <property type="entry name" value="MukB_N_dom"/>
</dbReference>
<dbReference type="InterPro" id="IPR027417">
    <property type="entry name" value="P-loop_NTPase"/>
</dbReference>
<dbReference type="NCBIfam" id="NF003422">
    <property type="entry name" value="PRK04863.1"/>
    <property type="match status" value="1"/>
</dbReference>
<dbReference type="PANTHER" id="PTHR42963">
    <property type="entry name" value="CHROMOSOME PARTITION PROTEIN MUKB"/>
    <property type="match status" value="1"/>
</dbReference>
<dbReference type="PANTHER" id="PTHR42963:SF1">
    <property type="entry name" value="DUF4476 DOMAIN-CONTAINING PROTEIN"/>
    <property type="match status" value="1"/>
</dbReference>
<dbReference type="Pfam" id="PF04310">
    <property type="entry name" value="MukB"/>
    <property type="match status" value="1"/>
</dbReference>
<dbReference type="Pfam" id="PF16330">
    <property type="entry name" value="MukB_hinge"/>
    <property type="match status" value="1"/>
</dbReference>
<dbReference type="Pfam" id="PF13558">
    <property type="entry name" value="SbcC_Walker_B"/>
    <property type="match status" value="1"/>
</dbReference>
<dbReference type="PIRSF" id="PIRSF005246">
    <property type="entry name" value="MukB"/>
    <property type="match status" value="1"/>
</dbReference>
<dbReference type="SUPFAM" id="SSF52540">
    <property type="entry name" value="P-loop containing nucleoside triphosphate hydrolases"/>
    <property type="match status" value="2"/>
</dbReference>
<sequence length="1485" mass="169909">MIERGKFRSLTLVNWNGFFARTFDLDELVTTLSGGNGAGKSTTMAAFVTALIPDLTLLHFRNTTEAGATSGSRDKGLHGKLRAGVCYSTLDVVNSRHQRVVVGVRLQQVAGRDRKVDIKPFTIQGLPTAIQPTEILTELVAERQARVLSLPELKERVEAMEGVQFKQFNSITDYHSLMFDLGVIPKRLRSSADRSKFYRLIEASLYGGISSAITRSLRDYLLPENSGVRKAFQDMEAALRENRMTLEAIRVTQSDRDLFKHLISEATSYVAADYMRHANERRIHLDSALVLRRDLFSSRKQLVTEQYRHVEMSRELAEQSGAESDLETDYQAASDHLNLVQTAMRQQEKIERYQSDLEELTYRLEEQSEVVSEASEQQADNEARAEAAELEVDELKSQLADYQQALDVQQTRAIQYQQALQALERARALCQLPELTADNAEEWLETFHAKEQEATESLLQLEQKLSVADAAHSQFEQAYQLVVNIAGEVSRSEAWQTARELLRDWPSQQHLAERVQPLRMRLSELEQRLRAQQDAERLLQEFCKRQGNAYQPEELEALQRELESQVEELSLSVSDAGERRMAMRQELEQLKLKIQELTARAPVWLAAQDALSQLSEQSGEALEDSRQVTEYMQQLLERERETTVERDEIAASKRAIEAQIERLSQPSGAEDARLIALAERFGGVLLSEIYDDVTIDDAPYFSALYGPSRHGIVVPDLSLVREHLQGLDDCPEDLYLIEGDPQSFDDSVFAVEEHEKAVVVKIADRQWRYSRYPEVPLFGRAARENRLETLYQERDRLAERYATLSFDVQKTQRTHQAFSRFIGSHLAVAFDADPEAEIRLLNTRRGEIERALNAHEDQNQQQRQQFDQAKEGISALNRLIPLVSLLLDETLTDRVEEITEELAEAQEAARYIQQHGVSLTKLEPLLSVLQSDPQQHEQLQESYVLAQNSQRLAKQQAFALTEVVQRRAHFSYTDSAGMLTENSDLNDKLRQRLEQAEAERTRAREQLRQYQSQFTQYSQVLASLKSSYDAKRDMLKELSQELVDIGVPADANAEARARARRDELHAALSTNRSRRNQLEKQLTFCEAEMDSLQKKLRKLERDYHQIREQVVNAKAGWCAVMRMVKDNGVERRLHRRELAYMDGDELRSMSDKALGALRLAVADNEHLRDVLRLSEDPKRPERKIQFYIAVYQHLRERIRQDIIRTDDPVEAIEQMEIELGRLTEELTAREQKLAISSKSVSNIIRKTIHREQNRIRMLNQGLQAVSFGQVKSVRLNVNVREAHATLLDVLSEQQEQHQDLFNSNRLTFSEALAKLYQRLNPQMDMGQRLPQTIGEELLDYRNYLELEVEVYRGADGWLRAESGALSTGEAIGTGMSILVMVVQSWEEESRRLRGKDISPCRLLFLDEAARLDAKSIATLFELCERLEMQLIIAAPENISPEKGTTYKLVRKVFQNHEHVHVVGLRGFANEMPSLPPIAAELQQGG</sequence>
<comment type="function">
    <text evidence="1">Plays a central role in chromosome condensation, segregation and cell cycle progression. Functions as a homodimer, which is essential for chromosome partition. Involved in negative DNA supercoiling in vivo, and by this means organize and compact chromosomes. May achieve or facilitate chromosome segregation by condensation DNA from both sides of a centrally located replisome during cell division.</text>
</comment>
<comment type="subunit">
    <text evidence="1">Homodimerization via its hinge domain. Binds to DNA via its C-terminal region. Interacts, and probably forms a ternary complex, with MukE and MukF via its C-terminal region. The complex formation is stimulated by calcium or magnesium. Interacts with tubulin-related protein FtsZ.</text>
</comment>
<comment type="subcellular location">
    <subcellularLocation>
        <location evidence="1">Cytoplasm</location>
        <location evidence="1">Nucleoid</location>
    </subcellularLocation>
    <text evidence="1">Restricted to the nucleoid region.</text>
</comment>
<comment type="domain">
    <text evidence="1">The hinge domain, which separates the large intramolecular coiled coil regions, allows the homodimerization, forming a V-shaped homodimer.</text>
</comment>
<comment type="similarity">
    <text evidence="1">Belongs to the SMC family. MukB subfamily.</text>
</comment>
<protein>
    <recommendedName>
        <fullName evidence="1">Chromosome partition protein MukB</fullName>
    </recommendedName>
    <alternativeName>
        <fullName evidence="1">Structural maintenance of chromosome-related protein</fullName>
    </alternativeName>
</protein>
<organism>
    <name type="scientific">Yersinia pestis bv. Antiqua (strain Nepal516)</name>
    <dbReference type="NCBI Taxonomy" id="377628"/>
    <lineage>
        <taxon>Bacteria</taxon>
        <taxon>Pseudomonadati</taxon>
        <taxon>Pseudomonadota</taxon>
        <taxon>Gammaproteobacteria</taxon>
        <taxon>Enterobacterales</taxon>
        <taxon>Yersiniaceae</taxon>
        <taxon>Yersinia</taxon>
    </lineage>
</organism>
<accession>Q1CGI0</accession>
<accession>C4GVR1</accession>
<feature type="chain" id="PRO_1000069920" description="Chromosome partition protein MukB">
    <location>
        <begin position="1"/>
        <end position="1485"/>
    </location>
</feature>
<feature type="region of interest" description="Flexible hinge" evidence="1">
    <location>
        <begin position="666"/>
        <end position="783"/>
    </location>
</feature>
<feature type="coiled-coil region" evidence="1">
    <location>
        <begin position="337"/>
        <end position="480"/>
    </location>
</feature>
<feature type="coiled-coil region" evidence="1">
    <location>
        <begin position="509"/>
        <end position="605"/>
    </location>
</feature>
<feature type="coiled-coil region" evidence="1">
    <location>
        <begin position="780"/>
        <end position="805"/>
    </location>
</feature>
<feature type="coiled-coil region" evidence="1">
    <location>
        <begin position="835"/>
        <end position="915"/>
    </location>
</feature>
<feature type="coiled-coil region" evidence="1">
    <location>
        <begin position="977"/>
        <end position="1116"/>
    </location>
</feature>
<feature type="coiled-coil region" evidence="1">
    <location>
        <begin position="1210"/>
        <end position="1235"/>
    </location>
</feature>
<feature type="binding site" evidence="1">
    <location>
        <begin position="34"/>
        <end position="41"/>
    </location>
    <ligand>
        <name>ATP</name>
        <dbReference type="ChEBI" id="CHEBI:30616"/>
    </ligand>
</feature>